<evidence type="ECO:0000250" key="1"/>
<evidence type="ECO:0000250" key="2">
    <source>
        <dbReference type="UniProtKB" id="P04912"/>
    </source>
</evidence>
<evidence type="ECO:0000269" key="3">
    <source>
    </source>
</evidence>
<evidence type="ECO:0000305" key="4"/>
<evidence type="ECO:0007829" key="5">
    <source>
        <dbReference type="PDB" id="7YBF"/>
    </source>
</evidence>
<organism>
    <name type="scientific">Schizosaccharomyces pombe (strain 972 / ATCC 24843)</name>
    <name type="common">Fission yeast</name>
    <dbReference type="NCBI Taxonomy" id="284812"/>
    <lineage>
        <taxon>Eukaryota</taxon>
        <taxon>Fungi</taxon>
        <taxon>Dikarya</taxon>
        <taxon>Ascomycota</taxon>
        <taxon>Taphrinomycotina</taxon>
        <taxon>Schizosaccharomycetes</taxon>
        <taxon>Schizosaccharomycetales</taxon>
        <taxon>Schizosaccharomycetaceae</taxon>
        <taxon>Schizosaccharomyces</taxon>
    </lineage>
</organism>
<dbReference type="EMBL" id="M11500">
    <property type="protein sequence ID" value="AAA35310.1"/>
    <property type="molecule type" value="Genomic_DNA"/>
</dbReference>
<dbReference type="EMBL" id="X05221">
    <property type="protein sequence ID" value="CAA28849.1"/>
    <property type="molecule type" value="Genomic_DNA"/>
</dbReference>
<dbReference type="EMBL" id="CU329670">
    <property type="protein sequence ID" value="CAB10117.1"/>
    <property type="molecule type" value="Genomic_DNA"/>
</dbReference>
<dbReference type="PIR" id="C27399">
    <property type="entry name" value="HSZPA3"/>
</dbReference>
<dbReference type="RefSeq" id="NP_594421.1">
    <property type="nucleotide sequence ID" value="NM_001019850.2"/>
</dbReference>
<dbReference type="PDB" id="7P0L">
    <property type="method" value="X-ray"/>
    <property type="resolution" value="1.97 A"/>
    <property type="chains" value="C/D=125-131"/>
</dbReference>
<dbReference type="PDB" id="7YBF">
    <property type="method" value="X-ray"/>
    <property type="resolution" value="2.15 A"/>
    <property type="chains" value="A/B=15-108"/>
</dbReference>
<dbReference type="PDBsum" id="7P0L"/>
<dbReference type="PDBsum" id="7YBF"/>
<dbReference type="SMR" id="P04910"/>
<dbReference type="BioGRID" id="278699">
    <property type="interactions" value="29"/>
</dbReference>
<dbReference type="DIP" id="DIP-59186N"/>
<dbReference type="FunCoup" id="P04910">
    <property type="interactions" value="273"/>
</dbReference>
<dbReference type="IntAct" id="P04910">
    <property type="interactions" value="2"/>
</dbReference>
<dbReference type="STRING" id="284812.P04910"/>
<dbReference type="iPTMnet" id="P04910"/>
<dbReference type="SwissPalm" id="P04910"/>
<dbReference type="PaxDb" id="4896-SPAC19G12.06c.1"/>
<dbReference type="EnsemblFungi" id="SPAC19G12.06c.1">
    <property type="protein sequence ID" value="SPAC19G12.06c.1:pep"/>
    <property type="gene ID" value="SPAC19G12.06c"/>
</dbReference>
<dbReference type="GeneID" id="2542226"/>
<dbReference type="KEGG" id="spo:2542226"/>
<dbReference type="PomBase" id="SPAC19G12.06c">
    <property type="gene designation" value="hta2"/>
</dbReference>
<dbReference type="VEuPathDB" id="FungiDB:SPAC19G12.06c"/>
<dbReference type="eggNOG" id="KOG1756">
    <property type="taxonomic scope" value="Eukaryota"/>
</dbReference>
<dbReference type="HOGENOM" id="CLU_062828_3_1_1"/>
<dbReference type="InParanoid" id="P04910"/>
<dbReference type="OMA" id="CALESQH"/>
<dbReference type="PhylomeDB" id="P04910"/>
<dbReference type="Reactome" id="R-SPO-2299718">
    <property type="pathway name" value="Condensation of Prophase Chromosomes"/>
</dbReference>
<dbReference type="Reactome" id="R-SPO-2559580">
    <property type="pathway name" value="Oxidative Stress Induced Senescence"/>
</dbReference>
<dbReference type="Reactome" id="R-SPO-3214815">
    <property type="pathway name" value="HDACs deacetylate histones"/>
</dbReference>
<dbReference type="Reactome" id="R-SPO-3214858">
    <property type="pathway name" value="RMTs methylate histone arginines"/>
</dbReference>
<dbReference type="Reactome" id="R-SPO-427359">
    <property type="pathway name" value="SIRT1 negatively regulates rRNA expression"/>
</dbReference>
<dbReference type="Reactome" id="R-SPO-5578749">
    <property type="pathway name" value="Transcriptional regulation by small RNAs"/>
</dbReference>
<dbReference type="Reactome" id="R-SPO-5625886">
    <property type="pathway name" value="Activated PKN1 stimulates transcription of AR (androgen receptor) regulated genes KLK2 and KLK3"/>
</dbReference>
<dbReference type="Reactome" id="R-SPO-5689880">
    <property type="pathway name" value="Ub-specific processing proteases"/>
</dbReference>
<dbReference type="Reactome" id="R-SPO-5693565">
    <property type="pathway name" value="Recruitment and ATM-mediated phosphorylation of repair and signaling proteins at DNA double strand breaks"/>
</dbReference>
<dbReference type="Reactome" id="R-SPO-68616">
    <property type="pathway name" value="Assembly of the ORC complex at the origin of replication"/>
</dbReference>
<dbReference type="Reactome" id="R-SPO-73772">
    <property type="pathway name" value="RNA Polymerase I Promoter Escape"/>
</dbReference>
<dbReference type="Reactome" id="R-SPO-9018519">
    <property type="pathway name" value="Estrogen-dependent gene expression"/>
</dbReference>
<dbReference type="PRO" id="PR:P04910"/>
<dbReference type="Proteomes" id="UP000002485">
    <property type="component" value="Chromosome I"/>
</dbReference>
<dbReference type="GO" id="GO:0099115">
    <property type="term" value="C:chromosome, subtelomeric region"/>
    <property type="evidence" value="ECO:0000314"/>
    <property type="project" value="PomBase"/>
</dbReference>
<dbReference type="GO" id="GO:0031934">
    <property type="term" value="C:mating-type region heterochromatin"/>
    <property type="evidence" value="ECO:0000314"/>
    <property type="project" value="PomBase"/>
</dbReference>
<dbReference type="GO" id="GO:0000786">
    <property type="term" value="C:nucleosome"/>
    <property type="evidence" value="ECO:0000318"/>
    <property type="project" value="GO_Central"/>
</dbReference>
<dbReference type="GO" id="GO:0005634">
    <property type="term" value="C:nucleus"/>
    <property type="evidence" value="ECO:0000269"/>
    <property type="project" value="PomBase"/>
</dbReference>
<dbReference type="GO" id="GO:0005721">
    <property type="term" value="C:pericentric heterochromatin"/>
    <property type="evidence" value="ECO:0000314"/>
    <property type="project" value="PomBase"/>
</dbReference>
<dbReference type="GO" id="GO:0033553">
    <property type="term" value="C:rDNA heterochromatin"/>
    <property type="evidence" value="ECO:0000314"/>
    <property type="project" value="PomBase"/>
</dbReference>
<dbReference type="GO" id="GO:0140463">
    <property type="term" value="F:chromatin-protein adaptor activity"/>
    <property type="evidence" value="ECO:0000315"/>
    <property type="project" value="PomBase"/>
</dbReference>
<dbReference type="GO" id="GO:0003677">
    <property type="term" value="F:DNA binding"/>
    <property type="evidence" value="ECO:0000255"/>
    <property type="project" value="PomBase"/>
</dbReference>
<dbReference type="GO" id="GO:0046982">
    <property type="term" value="F:protein heterodimerization activity"/>
    <property type="evidence" value="ECO:0007669"/>
    <property type="project" value="InterPro"/>
</dbReference>
<dbReference type="GO" id="GO:0030527">
    <property type="term" value="F:structural constituent of chromatin"/>
    <property type="evidence" value="ECO:0000318"/>
    <property type="project" value="GO_Central"/>
</dbReference>
<dbReference type="GO" id="GO:0006302">
    <property type="term" value="P:double-strand break repair"/>
    <property type="evidence" value="ECO:0000269"/>
    <property type="project" value="PomBase"/>
</dbReference>
<dbReference type="GO" id="GO:0031507">
    <property type="term" value="P:heterochromatin formation"/>
    <property type="evidence" value="ECO:0000318"/>
    <property type="project" value="GO_Central"/>
</dbReference>
<dbReference type="GO" id="GO:0045143">
    <property type="term" value="P:homologous chromosome segregation"/>
    <property type="evidence" value="ECO:0000315"/>
    <property type="project" value="PomBase"/>
</dbReference>
<dbReference type="GO" id="GO:0007076">
    <property type="term" value="P:mitotic chromosome condensation"/>
    <property type="evidence" value="ECO:0000315"/>
    <property type="project" value="PomBase"/>
</dbReference>
<dbReference type="GO" id="GO:0044773">
    <property type="term" value="P:mitotic DNA damage checkpoint signaling"/>
    <property type="evidence" value="ECO:0000269"/>
    <property type="project" value="PomBase"/>
</dbReference>
<dbReference type="GO" id="GO:0007095">
    <property type="term" value="P:mitotic G2 DNA damage checkpoint signaling"/>
    <property type="evidence" value="ECO:0000314"/>
    <property type="project" value="PomBase"/>
</dbReference>
<dbReference type="CDD" id="cd00074">
    <property type="entry name" value="HFD_H2A"/>
    <property type="match status" value="1"/>
</dbReference>
<dbReference type="FunFam" id="1.10.20.10:FF:000008">
    <property type="entry name" value="Histone H2A"/>
    <property type="match status" value="1"/>
</dbReference>
<dbReference type="Gene3D" id="1.10.20.10">
    <property type="entry name" value="Histone, subunit A"/>
    <property type="match status" value="1"/>
</dbReference>
<dbReference type="InterPro" id="IPR009072">
    <property type="entry name" value="Histone-fold"/>
</dbReference>
<dbReference type="InterPro" id="IPR002119">
    <property type="entry name" value="Histone_H2A"/>
</dbReference>
<dbReference type="InterPro" id="IPR007125">
    <property type="entry name" value="Histone_H2A/H2B/H3"/>
</dbReference>
<dbReference type="InterPro" id="IPR032454">
    <property type="entry name" value="Histone_H2A_C"/>
</dbReference>
<dbReference type="InterPro" id="IPR032458">
    <property type="entry name" value="Histone_H2A_CS"/>
</dbReference>
<dbReference type="PANTHER" id="PTHR23430">
    <property type="entry name" value="HISTONE H2A"/>
    <property type="match status" value="1"/>
</dbReference>
<dbReference type="Pfam" id="PF00125">
    <property type="entry name" value="Histone"/>
    <property type="match status" value="1"/>
</dbReference>
<dbReference type="Pfam" id="PF16211">
    <property type="entry name" value="Histone_H2A_C"/>
    <property type="match status" value="1"/>
</dbReference>
<dbReference type="PRINTS" id="PR00620">
    <property type="entry name" value="HISTONEH2A"/>
</dbReference>
<dbReference type="SMART" id="SM00414">
    <property type="entry name" value="H2A"/>
    <property type="match status" value="1"/>
</dbReference>
<dbReference type="SUPFAM" id="SSF47113">
    <property type="entry name" value="Histone-fold"/>
    <property type="match status" value="1"/>
</dbReference>
<dbReference type="PROSITE" id="PS00046">
    <property type="entry name" value="HISTONE_H2A"/>
    <property type="match status" value="1"/>
</dbReference>
<accession>P04910</accession>
<protein>
    <recommendedName>
        <fullName>Histone H2A-beta</fullName>
    </recommendedName>
    <alternativeName>
        <fullName>H2A.2</fullName>
    </alternativeName>
</protein>
<keyword id="KW-0002">3D-structure</keyword>
<keyword id="KW-0007">Acetylation</keyword>
<keyword id="KW-0158">Chromosome</keyword>
<keyword id="KW-0227">DNA damage</keyword>
<keyword id="KW-0234">DNA repair</keyword>
<keyword id="KW-0238">DNA-binding</keyword>
<keyword id="KW-0488">Methylation</keyword>
<keyword id="KW-0544">Nucleosome core</keyword>
<keyword id="KW-0539">Nucleus</keyword>
<keyword id="KW-0597">Phosphoprotein</keyword>
<keyword id="KW-1185">Reference proteome</keyword>
<gene>
    <name type="primary">hta2</name>
    <name type="ORF">SPAC19G12.06c</name>
</gene>
<comment type="function">
    <text evidence="3">Core component of nucleosome which plays a central role in DNA double strand break (DSB) repair. Nucleosomes wrap and compact DNA into chromatin, limiting DNA accessibility to the cellular machineries which require DNA as a template. Histones thereby play a central role in transcription regulation, DNA repair, DNA replication and chromosomal stability. DNA accessibility is regulated via a complex set of post-translational modifications of histones, also called histone code, and nucleosome remodeling.</text>
</comment>
<comment type="subunit">
    <text>The nucleosome is a histone octamer containing two molecules each of H2A, H2B, H3 and H4 assembled in one H3-H4 heterotetramer and two H2A-H2B heterodimers. The octamer wraps approximately 147 bp of DNA.</text>
</comment>
<comment type="interaction">
    <interactant intactId="EBI-15929287">
        <id>P04910</id>
    </interactant>
    <interactant intactId="EBI-1149594">
        <id>Q9Y7R3</id>
        <label>cnd2</label>
    </interactant>
    <organismsDiffer>false</organismsDiffer>
    <experiments>2</experiments>
</comment>
<comment type="interaction">
    <interactant intactId="EBI-15929287">
        <id>P04910</id>
    </interactant>
    <interactant intactId="EBI-1046410">
        <id>Q15003</id>
        <label>NCAPH</label>
    </interactant>
    <organismsDiffer>true</organismsDiffer>
    <experiments>2</experiments>
</comment>
<comment type="subcellular location">
    <subcellularLocation>
        <location>Nucleus</location>
    </subcellularLocation>
    <subcellularLocation>
        <location>Chromosome</location>
    </subcellularLocation>
</comment>
<comment type="domain">
    <text>The [ST]-Q motif constitutes a recognition sequence for kinases from the PI3/PI4-kinase family.</text>
</comment>
<comment type="PTM">
    <text evidence="3">Phosphorylated to form H2AS128ph (gamma-H2A) in response to DNA double-strand breaks (DSBs) generated by exogenous genotoxic agents and by stalled replication forks. Phosphorylation is dependent on the DNA damage checkpoint kinases rad3/ATR and tel1/ATM, spreads on either side of a detected DSB site and may mark the surrounding chromatin for recruitment of proteins required for DNA damage signaling and repair. Gamma-H2A is required for recruiting crb2, a modulator of DNA damage checkpoint signaling, to DSB sites. Gamma-H2A is removed from the DNA prior to the strand invasion-primer extension step of the repair process and subsequently dephosphorylated. Dephosphorylation is necessary for efficient recovery from the DNA damage checkpoint.</text>
</comment>
<comment type="PTM">
    <text evidence="1">Acetylated by esa1 to form H2AK4ac and H2AK7ac.</text>
</comment>
<comment type="miscellaneous">
    <text evidence="4">In contrast to vertebrates and insects, its C-terminus is not monoubiquitinated.</text>
</comment>
<comment type="similarity">
    <text evidence="4">Belongs to the histone H2A family.</text>
</comment>
<comment type="caution">
    <text evidence="4">To ensure consistency between histone entries, we follow the 'Brno' nomenclature for histone modifications, with positions referring to those used in the literature for the 'closest' model organism. Due to slight variations in histone sequences between organisms and to the presence of initiator methionine in UniProtKB/Swiss-Prot sequences, the actual positions of modified amino acids in the sequence generally differ. In this entry the following conventions are used: H2AK4ac = acetylated Lys-5; H2AK7ac = acetylated Lys-9; H2AS128ph = phosphorylated Ser-128.</text>
</comment>
<reference key="1">
    <citation type="journal article" date="1985" name="Mol. Cell. Biol.">
        <title>Organization, primary structure, and evolution of histone H2A and H2B genes of the fission yeast Schizosaccharomyces pombe.</title>
        <authorList>
            <person name="Choe J."/>
            <person name="Schuster T."/>
            <person name="Grunstein M."/>
        </authorList>
    </citation>
    <scope>NUCLEOTIDE SEQUENCE [GENOMIC DNA]</scope>
</reference>
<reference key="2">
    <citation type="journal article" date="1985" name="EMBO J.">
        <title>Histone gene organization of fission yeast: a common upstream sequence.</title>
        <authorList>
            <person name="Matsumoto S."/>
            <person name="Yanagida M."/>
        </authorList>
    </citation>
    <scope>NUCLEOTIDE SEQUENCE [GENOMIC DNA]</scope>
</reference>
<reference key="3">
    <citation type="journal article" date="2002" name="Nature">
        <title>The genome sequence of Schizosaccharomyces pombe.</title>
        <authorList>
            <person name="Wood V."/>
            <person name="Gwilliam R."/>
            <person name="Rajandream M.A."/>
            <person name="Lyne M.H."/>
            <person name="Lyne R."/>
            <person name="Stewart A."/>
            <person name="Sgouros J.G."/>
            <person name="Peat N."/>
            <person name="Hayles J."/>
            <person name="Baker S.G."/>
            <person name="Basham D."/>
            <person name="Bowman S."/>
            <person name="Brooks K."/>
            <person name="Brown D."/>
            <person name="Brown S."/>
            <person name="Chillingworth T."/>
            <person name="Churcher C.M."/>
            <person name="Collins M."/>
            <person name="Connor R."/>
            <person name="Cronin A."/>
            <person name="Davis P."/>
            <person name="Feltwell T."/>
            <person name="Fraser A."/>
            <person name="Gentles S."/>
            <person name="Goble A."/>
            <person name="Hamlin N."/>
            <person name="Harris D.E."/>
            <person name="Hidalgo J."/>
            <person name="Hodgson G."/>
            <person name="Holroyd S."/>
            <person name="Hornsby T."/>
            <person name="Howarth S."/>
            <person name="Huckle E.J."/>
            <person name="Hunt S."/>
            <person name="Jagels K."/>
            <person name="James K.D."/>
            <person name="Jones L."/>
            <person name="Jones M."/>
            <person name="Leather S."/>
            <person name="McDonald S."/>
            <person name="McLean J."/>
            <person name="Mooney P."/>
            <person name="Moule S."/>
            <person name="Mungall K.L."/>
            <person name="Murphy L.D."/>
            <person name="Niblett D."/>
            <person name="Odell C."/>
            <person name="Oliver K."/>
            <person name="O'Neil S."/>
            <person name="Pearson D."/>
            <person name="Quail M.A."/>
            <person name="Rabbinowitsch E."/>
            <person name="Rutherford K.M."/>
            <person name="Rutter S."/>
            <person name="Saunders D."/>
            <person name="Seeger K."/>
            <person name="Sharp S."/>
            <person name="Skelton J."/>
            <person name="Simmonds M.N."/>
            <person name="Squares R."/>
            <person name="Squares S."/>
            <person name="Stevens K."/>
            <person name="Taylor K."/>
            <person name="Taylor R.G."/>
            <person name="Tivey A."/>
            <person name="Walsh S.V."/>
            <person name="Warren T."/>
            <person name="Whitehead S."/>
            <person name="Woodward J.R."/>
            <person name="Volckaert G."/>
            <person name="Aert R."/>
            <person name="Robben J."/>
            <person name="Grymonprez B."/>
            <person name="Weltjens I."/>
            <person name="Vanstreels E."/>
            <person name="Rieger M."/>
            <person name="Schaefer M."/>
            <person name="Mueller-Auer S."/>
            <person name="Gabel C."/>
            <person name="Fuchs M."/>
            <person name="Duesterhoeft A."/>
            <person name="Fritzc C."/>
            <person name="Holzer E."/>
            <person name="Moestl D."/>
            <person name="Hilbert H."/>
            <person name="Borzym K."/>
            <person name="Langer I."/>
            <person name="Beck A."/>
            <person name="Lehrach H."/>
            <person name="Reinhardt R."/>
            <person name="Pohl T.M."/>
            <person name="Eger P."/>
            <person name="Zimmermann W."/>
            <person name="Wedler H."/>
            <person name="Wambutt R."/>
            <person name="Purnelle B."/>
            <person name="Goffeau A."/>
            <person name="Cadieu E."/>
            <person name="Dreano S."/>
            <person name="Gloux S."/>
            <person name="Lelaure V."/>
            <person name="Mottier S."/>
            <person name="Galibert F."/>
            <person name="Aves S.J."/>
            <person name="Xiang Z."/>
            <person name="Hunt C."/>
            <person name="Moore K."/>
            <person name="Hurst S.M."/>
            <person name="Lucas M."/>
            <person name="Rochet M."/>
            <person name="Gaillardin C."/>
            <person name="Tallada V.A."/>
            <person name="Garzon A."/>
            <person name="Thode G."/>
            <person name="Daga R.R."/>
            <person name="Cruzado L."/>
            <person name="Jimenez J."/>
            <person name="Sanchez M."/>
            <person name="del Rey F."/>
            <person name="Benito J."/>
            <person name="Dominguez A."/>
            <person name="Revuelta J.L."/>
            <person name="Moreno S."/>
            <person name="Armstrong J."/>
            <person name="Forsburg S.L."/>
            <person name="Cerutti L."/>
            <person name="Lowe T."/>
            <person name="McCombie W.R."/>
            <person name="Paulsen I."/>
            <person name="Potashkin J."/>
            <person name="Shpakovski G.V."/>
            <person name="Ussery D."/>
            <person name="Barrell B.G."/>
            <person name="Nurse P."/>
        </authorList>
    </citation>
    <scope>NUCLEOTIDE SEQUENCE [LARGE SCALE GENOMIC DNA]</scope>
    <source>
        <strain>972 / ATCC 24843</strain>
    </source>
</reference>
<reference key="4">
    <citation type="journal article" date="2004" name="Mol. Cell. Biol.">
        <title>Histone H2A phosphorylation controls Crb2 recruitment at DNA breaks, maintains checkpoint arrest, and influences DNA repair in fission yeast.</title>
        <authorList>
            <person name="Nakamura T.M."/>
            <person name="Du L.-L."/>
            <person name="Redon C."/>
            <person name="Russell P."/>
        </authorList>
    </citation>
    <scope>FUNCTION</scope>
    <scope>MUTAGENESIS OF SER-128</scope>
    <scope>PHOSPHORYLATION AT SER-128</scope>
</reference>
<proteinExistence type="evidence at protein level"/>
<sequence>MSGGKSGGKAAVAKSAQSRSAKAGLAFPVGRVHRLLRKGNYAQRVGAGAPVYLAAVLEYLAAEILELAGNAARDNKKTRIIPRHLQLAIRNDEELNKLLGHVTIAQGGVVPNINAHLLPKQSGKGKPSQEL</sequence>
<feature type="initiator methionine" description="Removed" evidence="1">
    <location>
        <position position="1"/>
    </location>
</feature>
<feature type="chain" id="PRO_0000055325" description="Histone H2A-beta">
    <location>
        <begin position="2"/>
        <end position="131"/>
    </location>
</feature>
<feature type="short sequence motif" description="[ST]-Q motif">
    <location>
        <begin position="128"/>
        <end position="129"/>
    </location>
</feature>
<feature type="site" description="Not ubiquitinated" evidence="4">
    <location>
        <position position="120"/>
    </location>
</feature>
<feature type="modified residue" description="N-acetylserine" evidence="1">
    <location>
        <position position="2"/>
    </location>
</feature>
<feature type="modified residue" description="N6-acetyllysine" evidence="1">
    <location>
        <position position="5"/>
    </location>
</feature>
<feature type="modified residue" description="N6-acetyllysine" evidence="1">
    <location>
        <position position="9"/>
    </location>
</feature>
<feature type="modified residue" description="N5-methylglutamine" evidence="2">
    <location>
        <position position="106"/>
    </location>
</feature>
<feature type="modified residue" description="Phosphoserine" evidence="3">
    <location>
        <position position="128"/>
    </location>
</feature>
<feature type="mutagenesis site" description="Causes hypersensitivity to DNA-damage-inducing agents and impairs recruitment of crb2 to DSB sites." evidence="3">
    <original>S</original>
    <variation>A</variation>
    <location>
        <position position="128"/>
    </location>
</feature>
<feature type="helix" evidence="5">
    <location>
        <begin position="19"/>
        <end position="23"/>
    </location>
</feature>
<feature type="helix" evidence="5">
    <location>
        <begin position="29"/>
        <end position="38"/>
    </location>
</feature>
<feature type="helix" evidence="5">
    <location>
        <begin position="48"/>
        <end position="74"/>
    </location>
</feature>
<feature type="strand" evidence="5">
    <location>
        <begin position="78"/>
        <end position="80"/>
    </location>
</feature>
<feature type="helix" evidence="5">
    <location>
        <begin position="82"/>
        <end position="91"/>
    </location>
</feature>
<feature type="helix" evidence="5">
    <location>
        <begin position="93"/>
        <end position="99"/>
    </location>
</feature>
<name>H2A2_SCHPO</name>